<accession>Q7VKF9</accession>
<protein>
    <recommendedName>
        <fullName evidence="1">Large ribosomal subunit protein bL17</fullName>
    </recommendedName>
    <alternativeName>
        <fullName evidence="2">50S ribosomal protein L17</fullName>
    </alternativeName>
</protein>
<sequence>MRHRKSGRQLNRNSSHRQAMFRNMASALIGHEIIKTTLPKAKELRRVVEPLITLAKEDSVANRRLAFARTRNIETVAKLFNELGPRFAQRAGGYTRILKCGFRAGDNAPMAYIELVDRPEVAEVTAE</sequence>
<gene>
    <name evidence="1" type="primary">rplQ</name>
    <name type="ordered locus">HD_1950</name>
</gene>
<comment type="subunit">
    <text evidence="1">Part of the 50S ribosomal subunit. Contacts protein L32.</text>
</comment>
<comment type="similarity">
    <text evidence="1">Belongs to the bacterial ribosomal protein bL17 family.</text>
</comment>
<keyword id="KW-1185">Reference proteome</keyword>
<keyword id="KW-0687">Ribonucleoprotein</keyword>
<keyword id="KW-0689">Ribosomal protein</keyword>
<name>RL17_HAEDU</name>
<reference key="1">
    <citation type="submission" date="2003-06" db="EMBL/GenBank/DDBJ databases">
        <title>The complete genome sequence of Haemophilus ducreyi.</title>
        <authorList>
            <person name="Munson R.S. Jr."/>
            <person name="Ray W.C."/>
            <person name="Mahairas G."/>
            <person name="Sabo P."/>
            <person name="Mungur R."/>
            <person name="Johnson L."/>
            <person name="Nguyen D."/>
            <person name="Wang J."/>
            <person name="Forst C."/>
            <person name="Hood L."/>
        </authorList>
    </citation>
    <scope>NUCLEOTIDE SEQUENCE [LARGE SCALE GENOMIC DNA]</scope>
    <source>
        <strain>35000HP / ATCC 700724</strain>
    </source>
</reference>
<dbReference type="EMBL" id="AE017143">
    <property type="protein sequence ID" value="AAP96670.1"/>
    <property type="molecule type" value="Genomic_DNA"/>
</dbReference>
<dbReference type="RefSeq" id="WP_010945697.1">
    <property type="nucleotide sequence ID" value="NC_002940.2"/>
</dbReference>
<dbReference type="SMR" id="Q7VKF9"/>
<dbReference type="STRING" id="233412.HD_1950"/>
<dbReference type="GeneID" id="60733569"/>
<dbReference type="KEGG" id="hdu:HD_1950"/>
<dbReference type="eggNOG" id="COG0203">
    <property type="taxonomic scope" value="Bacteria"/>
</dbReference>
<dbReference type="HOGENOM" id="CLU_074407_2_0_6"/>
<dbReference type="OrthoDB" id="9809073at2"/>
<dbReference type="Proteomes" id="UP000001022">
    <property type="component" value="Chromosome"/>
</dbReference>
<dbReference type="GO" id="GO:0022625">
    <property type="term" value="C:cytosolic large ribosomal subunit"/>
    <property type="evidence" value="ECO:0007669"/>
    <property type="project" value="TreeGrafter"/>
</dbReference>
<dbReference type="GO" id="GO:0003735">
    <property type="term" value="F:structural constituent of ribosome"/>
    <property type="evidence" value="ECO:0007669"/>
    <property type="project" value="InterPro"/>
</dbReference>
<dbReference type="GO" id="GO:0006412">
    <property type="term" value="P:translation"/>
    <property type="evidence" value="ECO:0007669"/>
    <property type="project" value="UniProtKB-UniRule"/>
</dbReference>
<dbReference type="FunFam" id="3.90.1030.10:FF:000001">
    <property type="entry name" value="50S ribosomal protein L17"/>
    <property type="match status" value="1"/>
</dbReference>
<dbReference type="Gene3D" id="3.90.1030.10">
    <property type="entry name" value="Ribosomal protein L17"/>
    <property type="match status" value="1"/>
</dbReference>
<dbReference type="HAMAP" id="MF_01368">
    <property type="entry name" value="Ribosomal_bL17"/>
    <property type="match status" value="1"/>
</dbReference>
<dbReference type="InterPro" id="IPR000456">
    <property type="entry name" value="Ribosomal_bL17"/>
</dbReference>
<dbReference type="InterPro" id="IPR047859">
    <property type="entry name" value="Ribosomal_bL17_CS"/>
</dbReference>
<dbReference type="InterPro" id="IPR036373">
    <property type="entry name" value="Ribosomal_bL17_sf"/>
</dbReference>
<dbReference type="NCBIfam" id="TIGR00059">
    <property type="entry name" value="L17"/>
    <property type="match status" value="1"/>
</dbReference>
<dbReference type="PANTHER" id="PTHR14413:SF16">
    <property type="entry name" value="LARGE RIBOSOMAL SUBUNIT PROTEIN BL17M"/>
    <property type="match status" value="1"/>
</dbReference>
<dbReference type="PANTHER" id="PTHR14413">
    <property type="entry name" value="RIBOSOMAL PROTEIN L17"/>
    <property type="match status" value="1"/>
</dbReference>
<dbReference type="Pfam" id="PF01196">
    <property type="entry name" value="Ribosomal_L17"/>
    <property type="match status" value="1"/>
</dbReference>
<dbReference type="SUPFAM" id="SSF64263">
    <property type="entry name" value="Prokaryotic ribosomal protein L17"/>
    <property type="match status" value="1"/>
</dbReference>
<dbReference type="PROSITE" id="PS01167">
    <property type="entry name" value="RIBOSOMAL_L17"/>
    <property type="match status" value="1"/>
</dbReference>
<proteinExistence type="inferred from homology"/>
<feature type="chain" id="PRO_0000267878" description="Large ribosomal subunit protein bL17">
    <location>
        <begin position="1"/>
        <end position="127"/>
    </location>
</feature>
<evidence type="ECO:0000255" key="1">
    <source>
        <dbReference type="HAMAP-Rule" id="MF_01368"/>
    </source>
</evidence>
<evidence type="ECO:0000305" key="2"/>
<organism>
    <name type="scientific">Haemophilus ducreyi (strain 35000HP / ATCC 700724)</name>
    <dbReference type="NCBI Taxonomy" id="233412"/>
    <lineage>
        <taxon>Bacteria</taxon>
        <taxon>Pseudomonadati</taxon>
        <taxon>Pseudomonadota</taxon>
        <taxon>Gammaproteobacteria</taxon>
        <taxon>Pasteurellales</taxon>
        <taxon>Pasteurellaceae</taxon>
        <taxon>Haemophilus</taxon>
    </lineage>
</organism>